<accession>P52512</accession>
<evidence type="ECO:0000255" key="1">
    <source>
        <dbReference type="HAMAP-Rule" id="MF_04034"/>
    </source>
</evidence>
<evidence type="ECO:0000255" key="2">
    <source>
        <dbReference type="PROSITE-ProRule" id="PRU01368"/>
    </source>
</evidence>
<evidence type="ECO:0000269" key="3">
    <source>
    </source>
</evidence>
<keyword id="KW-1015">Disulfide bond</keyword>
<keyword id="KW-1169">Fusion of virus membrane with host cell membrane</keyword>
<keyword id="KW-1168">Fusion of virus membrane with host membrane</keyword>
<keyword id="KW-0325">Glycoprotein</keyword>
<keyword id="KW-1032">Host cell membrane</keyword>
<keyword id="KW-1040">Host Golgi apparatus</keyword>
<keyword id="KW-1043">Host membrane</keyword>
<keyword id="KW-0472">Membrane</keyword>
<keyword id="KW-0732">Signal</keyword>
<keyword id="KW-0261">Viral envelope protein</keyword>
<keyword id="KW-1162">Viral penetration into host cytoplasm</keyword>
<keyword id="KW-0946">Virion</keyword>
<keyword id="KW-1160">Virus entry into host cell</keyword>
<organismHost>
    <name type="scientific">Sus scrofa</name>
    <name type="common">Pig</name>
    <dbReference type="NCBI Taxonomy" id="9823"/>
</organismHost>
<dbReference type="EMBL" id="U02513">
    <property type="protein sequence ID" value="AAA18858.1"/>
    <property type="molecule type" value="Unassigned_DNA"/>
</dbReference>
<dbReference type="RefSeq" id="YP_068376.1">
    <property type="nucleotide sequence ID" value="NC_006151.1"/>
</dbReference>
<dbReference type="SMR" id="P52512"/>
<dbReference type="GeneID" id="2952527"/>
<dbReference type="KEGG" id="vg:2952527"/>
<dbReference type="GO" id="GO:0044177">
    <property type="term" value="C:host cell Golgi apparatus"/>
    <property type="evidence" value="ECO:0007669"/>
    <property type="project" value="UniProtKB-SubCell"/>
</dbReference>
<dbReference type="GO" id="GO:0020002">
    <property type="term" value="C:host cell plasma membrane"/>
    <property type="evidence" value="ECO:0007669"/>
    <property type="project" value="UniProtKB-SubCell"/>
</dbReference>
<dbReference type="GO" id="GO:0016020">
    <property type="term" value="C:membrane"/>
    <property type="evidence" value="ECO:0007669"/>
    <property type="project" value="UniProtKB-KW"/>
</dbReference>
<dbReference type="GO" id="GO:0019031">
    <property type="term" value="C:viral envelope"/>
    <property type="evidence" value="ECO:0007669"/>
    <property type="project" value="UniProtKB-KW"/>
</dbReference>
<dbReference type="GO" id="GO:0055036">
    <property type="term" value="C:virion membrane"/>
    <property type="evidence" value="ECO:0007669"/>
    <property type="project" value="UniProtKB-SubCell"/>
</dbReference>
<dbReference type="GO" id="GO:0019064">
    <property type="term" value="P:fusion of virus membrane with host plasma membrane"/>
    <property type="evidence" value="ECO:0007669"/>
    <property type="project" value="UniProtKB-KW"/>
</dbReference>
<dbReference type="GO" id="GO:0046718">
    <property type="term" value="P:symbiont entry into host cell"/>
    <property type="evidence" value="ECO:0007669"/>
    <property type="project" value="UniProtKB-KW"/>
</dbReference>
<dbReference type="Gene3D" id="3.30.390.170">
    <property type="match status" value="1"/>
</dbReference>
<dbReference type="HAMAP" id="MF_04034">
    <property type="entry name" value="HSV_GL_alphagamma"/>
    <property type="match status" value="1"/>
</dbReference>
<dbReference type="InterPro" id="IPR007923">
    <property type="entry name" value="Herpes_gL_N"/>
</dbReference>
<dbReference type="InterPro" id="IPR038311">
    <property type="entry name" value="Herpes_gL_N_sf"/>
</dbReference>
<dbReference type="InterPro" id="IPR034708">
    <property type="entry name" value="HSV_GL_alphagamma"/>
</dbReference>
<dbReference type="Pfam" id="PF05259">
    <property type="entry name" value="Herpes_UL1"/>
    <property type="match status" value="1"/>
</dbReference>
<dbReference type="PROSITE" id="PS52024">
    <property type="entry name" value="GL_AHV"/>
    <property type="match status" value="1"/>
</dbReference>
<protein>
    <recommendedName>
        <fullName evidence="1">Envelope glycoprotein L</fullName>
        <shortName evidence="1">gL</shortName>
    </recommendedName>
</protein>
<proteinExistence type="evidence at protein level"/>
<organism>
    <name type="scientific">Suid herpesvirus 1 (strain Kaplan)</name>
    <name type="common">SuHV-1</name>
    <name type="synonym">Pseudorabies virus (strain Kaplan)</name>
    <dbReference type="NCBI Taxonomy" id="33703"/>
    <lineage>
        <taxon>Viruses</taxon>
        <taxon>Duplodnaviria</taxon>
        <taxon>Heunggongvirae</taxon>
        <taxon>Peploviricota</taxon>
        <taxon>Herviviricetes</taxon>
        <taxon>Herpesvirales</taxon>
        <taxon>Orthoherpesviridae</taxon>
        <taxon>Alphaherpesvirinae</taxon>
        <taxon>Varicellovirus</taxon>
        <taxon>Varicellovirus suidalpha1</taxon>
        <taxon>Suid herpesvirus 1</taxon>
    </lineage>
</organism>
<reference key="1">
    <citation type="journal article" date="1994" name="J. Virol.">
        <title>Identification and characterization of a novel structural glycoprotein in pseudorabies virus, gL.</title>
        <authorList>
            <person name="Klupp B.G."/>
            <person name="Baumeister J."/>
            <person name="Karger A."/>
            <person name="Visser N."/>
            <person name="Mettenleiter T.C."/>
        </authorList>
    </citation>
    <scope>NUCLEOTIDE SEQUENCE [GENOMIC DNA]</scope>
    <scope>GLYCOSYLATION</scope>
</reference>
<name>GL_SUHVK</name>
<feature type="signal peptide" evidence="1">
    <location>
        <begin position="1"/>
        <end position="16"/>
    </location>
</feature>
<feature type="chain" id="PRO_0000038276" description="Envelope glycoprotein L" evidence="1">
    <location>
        <begin position="17"/>
        <end position="156"/>
    </location>
</feature>
<feature type="domain" description="gL alphaherpesvirus-type" evidence="2">
    <location>
        <begin position="50"/>
        <end position="156"/>
    </location>
</feature>
<feature type="region of interest" description="Interaction with gH" evidence="1">
    <location>
        <begin position="21"/>
        <end position="141"/>
    </location>
</feature>
<feature type="disulfide bond" evidence="2">
    <location>
        <begin position="71"/>
        <end position="95"/>
    </location>
</feature>
<gene>
    <name evidence="1" type="primary">gL</name>
    <name type="synonym">UL1</name>
</gene>
<sequence>MSPLVAVLVFFSAALGVPGTGVAGNPHGLDAIFEPPVTPAPPTRAPRREELEWDDEDHPLLGLEPPVGSRCHPYIAYSLPPDMTAVTSVVVKPYCSPPEVILWASGTAYLVNPFVAIQALAIGEPLNEAALKELGEVAVHKDSLPPLRYNGGPPAE</sequence>
<comment type="function">
    <text evidence="1">The heterodimer glycoprotein H-glycoprotein L is required for the fusion of viral and plasma membranes leading to virus entry into the host cell. Acts as a functional inhibitor of gH and maintains gH in an inhibited form. Upon binding to host integrins, gL dissociates from gH leading to activation of the viral fusion glycoproteins gB and gH.</text>
</comment>
<comment type="subunit">
    <text evidence="1">Interacts with glycoprotein H (gH); this interaction is necessary for the correct processing and cell surface expression of gH. The heterodimer gH/gL seems to interact with gB trimers during fusion.</text>
</comment>
<comment type="subcellular location">
    <subcellularLocation>
        <location evidence="1">Virion membrane</location>
        <topology evidence="1">Peripheral membrane protein</topology>
        <orientation evidence="1">Extracellular side</orientation>
    </subcellularLocation>
    <subcellularLocation>
        <location evidence="1">Host cell membrane</location>
        <topology evidence="1">Peripheral membrane protein</topology>
        <orientation evidence="1">Extracellular side</orientation>
    </subcellularLocation>
    <subcellularLocation>
        <location evidence="1">Host Golgi apparatus</location>
        <location evidence="1">Host trans-Golgi network</location>
    </subcellularLocation>
    <text evidence="1">gL associates with the extravirion surface through its binding to gH. During virion morphogenesis, this protein probably accumulates in the host trans-Golgi where secondary envelopment occurs.</text>
</comment>
<comment type="PTM">
    <text evidence="3">O-glycosylated, and sialylated.</text>
</comment>
<comment type="similarity">
    <text evidence="2">Belongs to the herpesviridae glycoprotein L (gL) family. Alphaherpesvirinae gL subfamily.</text>
</comment>